<evidence type="ECO:0000255" key="1">
    <source>
        <dbReference type="HAMAP-Rule" id="MF_01004"/>
    </source>
</evidence>
<reference key="1">
    <citation type="submission" date="2008-02" db="EMBL/GenBank/DDBJ databases">
        <title>Complete sequence of Escherichia coli C str. ATCC 8739.</title>
        <authorList>
            <person name="Copeland A."/>
            <person name="Lucas S."/>
            <person name="Lapidus A."/>
            <person name="Glavina del Rio T."/>
            <person name="Dalin E."/>
            <person name="Tice H."/>
            <person name="Bruce D."/>
            <person name="Goodwin L."/>
            <person name="Pitluck S."/>
            <person name="Kiss H."/>
            <person name="Brettin T."/>
            <person name="Detter J.C."/>
            <person name="Han C."/>
            <person name="Kuske C.R."/>
            <person name="Schmutz J."/>
            <person name="Larimer F."/>
            <person name="Land M."/>
            <person name="Hauser L."/>
            <person name="Kyrpides N."/>
            <person name="Mikhailova N."/>
            <person name="Ingram L."/>
            <person name="Richardson P."/>
        </authorList>
    </citation>
    <scope>NUCLEOTIDE SEQUENCE [LARGE SCALE GENOMIC DNA]</scope>
    <source>
        <strain>ATCC 8739 / DSM 1576 / NBRC 3972 / NCIMB 8545 / WDCM 00012 / Crooks</strain>
    </source>
</reference>
<sequence>MLTLARQQQRQNIRWLLCLSVLMLLALLLSLCAGEQWISPGDWFTPRGELFVWQIRLPRTLAVLLVGAALAISGAVMQALFENPLAEPGLLGVSNGAGVGLIAAVLLGQGQLPNWALGLCAIAGALIITLILLRFARRHLSTSRLLLAGVALGIICSALMTWAIYFSTSVDLRQLMYWMMGGFGGVDWRQSWLMLALIPVLLWICCQSRPMNMLALGEISARQLGLPLWFWRNVLVAATGWMVGVSVALAGAIGFIGLVIPHILRLCGLTDHRVLLPGCALAGASALLLADIVARLALAAAELPIGVVTATLGAPVFIWLLLKARR</sequence>
<feature type="chain" id="PRO_1000083955" description="Vitamin B12 import system permease protein BtuC">
    <location>
        <begin position="1"/>
        <end position="326"/>
    </location>
</feature>
<feature type="transmembrane region" description="Helical" evidence="1">
    <location>
        <begin position="15"/>
        <end position="35"/>
    </location>
</feature>
<feature type="transmembrane region" description="Helical" evidence="1">
    <location>
        <begin position="61"/>
        <end position="81"/>
    </location>
</feature>
<feature type="transmembrane region" description="Helical" evidence="1">
    <location>
        <begin position="88"/>
        <end position="108"/>
    </location>
</feature>
<feature type="transmembrane region" description="Helical" evidence="1">
    <location>
        <begin position="112"/>
        <end position="132"/>
    </location>
</feature>
<feature type="transmembrane region" description="Helical" evidence="1">
    <location>
        <begin position="146"/>
        <end position="166"/>
    </location>
</feature>
<feature type="transmembrane region" description="Helical" evidence="1">
    <location>
        <begin position="184"/>
        <end position="204"/>
    </location>
</feature>
<feature type="transmembrane region" description="Helical" evidence="1">
    <location>
        <begin position="240"/>
        <end position="260"/>
    </location>
</feature>
<feature type="transmembrane region" description="Helical" evidence="1">
    <location>
        <begin position="274"/>
        <end position="294"/>
    </location>
</feature>
<feature type="transmembrane region" description="Helical" evidence="1">
    <location>
        <begin position="302"/>
        <end position="322"/>
    </location>
</feature>
<protein>
    <recommendedName>
        <fullName evidence="1">Vitamin B12 import system permease protein BtuC</fullName>
    </recommendedName>
</protein>
<comment type="function">
    <text evidence="1">Part of the ABC transporter complex BtuCDF involved in vitamin B12 import. Involved in the translocation of the substrate across the membrane.</text>
</comment>
<comment type="subunit">
    <text evidence="1">The complex is composed of two ATP-binding proteins (BtuD), two transmembrane proteins (BtuC) and a solute-binding protein (BtuF).</text>
</comment>
<comment type="subcellular location">
    <subcellularLocation>
        <location evidence="1">Cell inner membrane</location>
        <topology evidence="1">Multi-pass membrane protein</topology>
    </subcellularLocation>
</comment>
<comment type="similarity">
    <text evidence="1">Belongs to the binding-protein-dependent transport system permease family. FecCD subfamily.</text>
</comment>
<name>BTUC_ECOLC</name>
<gene>
    <name evidence="1" type="primary">btuC</name>
    <name type="ordered locus">EcolC_1920</name>
</gene>
<dbReference type="EMBL" id="CP000946">
    <property type="protein sequence ID" value="ACA77566.1"/>
    <property type="molecule type" value="Genomic_DNA"/>
</dbReference>
<dbReference type="RefSeq" id="WP_000956529.1">
    <property type="nucleotide sequence ID" value="NZ_MTFT01000006.1"/>
</dbReference>
<dbReference type="SMR" id="B1IPL6"/>
<dbReference type="KEGG" id="ecl:EcolC_1920"/>
<dbReference type="HOGENOM" id="CLU_013016_0_3_6"/>
<dbReference type="GO" id="GO:0005886">
    <property type="term" value="C:plasma membrane"/>
    <property type="evidence" value="ECO:0007669"/>
    <property type="project" value="UniProtKB-SubCell"/>
</dbReference>
<dbReference type="GO" id="GO:0090482">
    <property type="term" value="F:vitamin transmembrane transporter activity"/>
    <property type="evidence" value="ECO:0007669"/>
    <property type="project" value="UniProtKB-UniRule"/>
</dbReference>
<dbReference type="GO" id="GO:0015889">
    <property type="term" value="P:cobalamin transport"/>
    <property type="evidence" value="ECO:0007669"/>
    <property type="project" value="UniProtKB-UniRule"/>
</dbReference>
<dbReference type="CDD" id="cd06550">
    <property type="entry name" value="TM_ABC_iron-siderophores_like"/>
    <property type="match status" value="1"/>
</dbReference>
<dbReference type="FunFam" id="1.10.3470.10:FF:000001">
    <property type="entry name" value="Vitamin B12 ABC transporter permease BtuC"/>
    <property type="match status" value="1"/>
</dbReference>
<dbReference type="Gene3D" id="1.10.3470.10">
    <property type="entry name" value="ABC transporter involved in vitamin B12 uptake, BtuC"/>
    <property type="match status" value="1"/>
</dbReference>
<dbReference type="HAMAP" id="MF_01004">
    <property type="entry name" value="BtuC"/>
    <property type="match status" value="1"/>
</dbReference>
<dbReference type="InterPro" id="IPR037294">
    <property type="entry name" value="ABC_BtuC-like"/>
</dbReference>
<dbReference type="InterPro" id="IPR023691">
    <property type="entry name" value="ABC_transptr_BtuC"/>
</dbReference>
<dbReference type="InterPro" id="IPR000522">
    <property type="entry name" value="ABC_transptr_permease_BtuC"/>
</dbReference>
<dbReference type="NCBIfam" id="NF003001">
    <property type="entry name" value="PRK03784.1"/>
    <property type="match status" value="1"/>
</dbReference>
<dbReference type="PANTHER" id="PTHR30472">
    <property type="entry name" value="FERRIC ENTEROBACTIN TRANSPORT SYSTEM PERMEASE PROTEIN"/>
    <property type="match status" value="1"/>
</dbReference>
<dbReference type="PANTHER" id="PTHR30472:SF29">
    <property type="entry name" value="VITAMIN B12 IMPORT SYSTEM PERMEASE PROTEIN BTUC"/>
    <property type="match status" value="1"/>
</dbReference>
<dbReference type="Pfam" id="PF01032">
    <property type="entry name" value="FecCD"/>
    <property type="match status" value="1"/>
</dbReference>
<dbReference type="SUPFAM" id="SSF81345">
    <property type="entry name" value="ABC transporter involved in vitamin B12 uptake, BtuC"/>
    <property type="match status" value="1"/>
</dbReference>
<accession>B1IPL6</accession>
<keyword id="KW-0997">Cell inner membrane</keyword>
<keyword id="KW-1003">Cell membrane</keyword>
<keyword id="KW-0472">Membrane</keyword>
<keyword id="KW-0812">Transmembrane</keyword>
<keyword id="KW-1133">Transmembrane helix</keyword>
<keyword id="KW-0813">Transport</keyword>
<proteinExistence type="inferred from homology"/>
<organism>
    <name type="scientific">Escherichia coli (strain ATCC 8739 / DSM 1576 / NBRC 3972 / NCIMB 8545 / WDCM 00012 / Crooks)</name>
    <dbReference type="NCBI Taxonomy" id="481805"/>
    <lineage>
        <taxon>Bacteria</taxon>
        <taxon>Pseudomonadati</taxon>
        <taxon>Pseudomonadota</taxon>
        <taxon>Gammaproteobacteria</taxon>
        <taxon>Enterobacterales</taxon>
        <taxon>Enterobacteriaceae</taxon>
        <taxon>Escherichia</taxon>
    </lineage>
</organism>